<name>CSGC_ECOLI</name>
<sequence>MNTLLLLAALSSQITFNTTQQGDVYTIIPEVTLTQSCLCRVQILSLREGSSGQSQTKQEKTLSLPANQPIALTKLSLNISPDDRVKIVVTVSDGQSLHLSQQWPPSSEKS</sequence>
<accession>P52107</accession>
<gene>
    <name type="primary">csgC</name>
    <name type="ordered locus">b1043</name>
    <name type="ordered locus">JW1026</name>
</gene>
<comment type="function">
    <text evidence="1">Plays a role in the extracellular assembly of CsgA into thin aggregative fimbriae (Tafi) fibers. Assembly may also require CsgE. Tafi are thought to be assembled via an extracellular nucleation-precipitation (ENP) pathway, and possibly also via an intracellular non-CsgC-dependent pathway (By similarity).</text>
</comment>
<comment type="subcellular location">
    <subcellularLocation>
        <location evidence="1">Periplasm</location>
    </subcellularLocation>
</comment>
<comment type="induction">
    <text evidence="3">Under control of the CsgD transcription factor, part of the csgBAC/ymdA operon.</text>
</comment>
<comment type="similarity">
    <text evidence="4">Belongs to the CsgC/AgfC family.</text>
</comment>
<organism>
    <name type="scientific">Escherichia coli (strain K12)</name>
    <dbReference type="NCBI Taxonomy" id="83333"/>
    <lineage>
        <taxon>Bacteria</taxon>
        <taxon>Pseudomonadati</taxon>
        <taxon>Pseudomonadota</taxon>
        <taxon>Gammaproteobacteria</taxon>
        <taxon>Enterobacterales</taxon>
        <taxon>Enterobacteriaceae</taxon>
        <taxon>Escherichia</taxon>
    </lineage>
</organism>
<evidence type="ECO:0000250" key="1"/>
<evidence type="ECO:0000255" key="2"/>
<evidence type="ECO:0000269" key="3">
    <source>
    </source>
</evidence>
<evidence type="ECO:0000305" key="4"/>
<feature type="signal peptide" evidence="2">
    <location>
        <begin position="1"/>
        <end position="8"/>
    </location>
</feature>
<feature type="chain" id="PRO_0000021013" description="Curli assembly protein CsgC">
    <location>
        <begin position="9"/>
        <end position="110"/>
    </location>
</feature>
<dbReference type="EMBL" id="X90754">
    <property type="protein sequence ID" value="CAA62283.1"/>
    <property type="molecule type" value="Genomic_DNA"/>
</dbReference>
<dbReference type="EMBL" id="U00096">
    <property type="protein sequence ID" value="AAC74127.1"/>
    <property type="molecule type" value="Genomic_DNA"/>
</dbReference>
<dbReference type="EMBL" id="AP009048">
    <property type="protein sequence ID" value="BAA35833.1"/>
    <property type="molecule type" value="Genomic_DNA"/>
</dbReference>
<dbReference type="PIR" id="S70789">
    <property type="entry name" value="S70789"/>
</dbReference>
<dbReference type="RefSeq" id="NP_415561.1">
    <property type="nucleotide sequence ID" value="NC_000913.3"/>
</dbReference>
<dbReference type="RefSeq" id="WP_001094300.1">
    <property type="nucleotide sequence ID" value="NZ_SSZK01000058.1"/>
</dbReference>
<dbReference type="SMR" id="P52107"/>
<dbReference type="BioGRID" id="4260066">
    <property type="interactions" value="1"/>
</dbReference>
<dbReference type="FunCoup" id="P52107">
    <property type="interactions" value="21"/>
</dbReference>
<dbReference type="STRING" id="511145.b1043"/>
<dbReference type="PaxDb" id="511145-b1043"/>
<dbReference type="EnsemblBacteria" id="AAC74127">
    <property type="protein sequence ID" value="AAC74127"/>
    <property type="gene ID" value="b1043"/>
</dbReference>
<dbReference type="GeneID" id="75203631"/>
<dbReference type="GeneID" id="945623"/>
<dbReference type="KEGG" id="ecj:JW1026"/>
<dbReference type="KEGG" id="eco:b1043"/>
<dbReference type="KEGG" id="ecoc:C3026_06350"/>
<dbReference type="PATRIC" id="fig|1411691.4.peg.1226"/>
<dbReference type="EchoBASE" id="EB3190"/>
<dbReference type="eggNOG" id="ENOG5032UJP">
    <property type="taxonomic scope" value="Bacteria"/>
</dbReference>
<dbReference type="HOGENOM" id="CLU_152585_0_0_6"/>
<dbReference type="InParanoid" id="P52107"/>
<dbReference type="OMA" id="SNQLWFD"/>
<dbReference type="OrthoDB" id="6629380at2"/>
<dbReference type="PhylomeDB" id="P52107"/>
<dbReference type="BioCyc" id="EcoCyc:G6548-MONOMER"/>
<dbReference type="PRO" id="PR:P52107"/>
<dbReference type="Proteomes" id="UP000000625">
    <property type="component" value="Chromosome"/>
</dbReference>
<dbReference type="GO" id="GO:0042597">
    <property type="term" value="C:periplasmic space"/>
    <property type="evidence" value="ECO:0007669"/>
    <property type="project" value="UniProtKB-SubCell"/>
</dbReference>
<dbReference type="Gene3D" id="2.60.40.2420">
    <property type="match status" value="1"/>
</dbReference>
<dbReference type="InterPro" id="IPR053722">
    <property type="entry name" value="Curli_assembly_CsgC/AgfC"/>
</dbReference>
<dbReference type="InterPro" id="IPR014491">
    <property type="entry name" value="Curli_production_prot_CsgC"/>
</dbReference>
<dbReference type="NCBIfam" id="NF007507">
    <property type="entry name" value="PRK10102.1"/>
    <property type="match status" value="1"/>
</dbReference>
<dbReference type="Pfam" id="PF10610">
    <property type="entry name" value="Tafi-CsgC"/>
    <property type="match status" value="1"/>
</dbReference>
<dbReference type="PIRSF" id="PIRSF018100">
    <property type="entry name" value="CsgC"/>
    <property type="match status" value="1"/>
</dbReference>
<reference key="1">
    <citation type="journal article" date="1995" name="Mol. Microbiol.">
        <title>Expression of two csg operons is required for production of fibronectin- and congo red-binding curli polymers in Escherichia coli K-12.</title>
        <authorList>
            <person name="Hammar M."/>
            <person name="Arnqvist A."/>
            <person name="Bian Z."/>
            <person name="Olsen A."/>
            <person name="Normark S."/>
        </authorList>
    </citation>
    <scope>NUCLEOTIDE SEQUENCE [GENOMIC DNA]</scope>
    <source>
        <strain>K12 / MC4100 / ATCC 35695 / DSM 6574</strain>
    </source>
</reference>
<reference key="2">
    <citation type="journal article" date="1996" name="DNA Res.">
        <title>A 718-kb DNA sequence of the Escherichia coli K-12 genome corresponding to the 12.7-28.0 min region on the linkage map.</title>
        <authorList>
            <person name="Oshima T."/>
            <person name="Aiba H."/>
            <person name="Baba T."/>
            <person name="Fujita K."/>
            <person name="Hayashi K."/>
            <person name="Honjo A."/>
            <person name="Ikemoto K."/>
            <person name="Inada T."/>
            <person name="Itoh T."/>
            <person name="Kajihara M."/>
            <person name="Kanai K."/>
            <person name="Kashimoto K."/>
            <person name="Kimura S."/>
            <person name="Kitagawa M."/>
            <person name="Makino K."/>
            <person name="Masuda S."/>
            <person name="Miki T."/>
            <person name="Mizobuchi K."/>
            <person name="Mori H."/>
            <person name="Motomura K."/>
            <person name="Nakamura Y."/>
            <person name="Nashimoto H."/>
            <person name="Nishio Y."/>
            <person name="Saito N."/>
            <person name="Sampei G."/>
            <person name="Seki Y."/>
            <person name="Tagami H."/>
            <person name="Takemoto K."/>
            <person name="Wada C."/>
            <person name="Yamamoto Y."/>
            <person name="Yano M."/>
            <person name="Horiuchi T."/>
        </authorList>
    </citation>
    <scope>NUCLEOTIDE SEQUENCE [LARGE SCALE GENOMIC DNA]</scope>
    <source>
        <strain>K12 / W3110 / ATCC 27325 / DSM 5911</strain>
    </source>
</reference>
<reference key="3">
    <citation type="journal article" date="1997" name="Science">
        <title>The complete genome sequence of Escherichia coli K-12.</title>
        <authorList>
            <person name="Blattner F.R."/>
            <person name="Plunkett G. III"/>
            <person name="Bloch C.A."/>
            <person name="Perna N.T."/>
            <person name="Burland V."/>
            <person name="Riley M."/>
            <person name="Collado-Vides J."/>
            <person name="Glasner J.D."/>
            <person name="Rode C.K."/>
            <person name="Mayhew G.F."/>
            <person name="Gregor J."/>
            <person name="Davis N.W."/>
            <person name="Kirkpatrick H.A."/>
            <person name="Goeden M.A."/>
            <person name="Rose D.J."/>
            <person name="Mau B."/>
            <person name="Shao Y."/>
        </authorList>
    </citation>
    <scope>NUCLEOTIDE SEQUENCE [LARGE SCALE GENOMIC DNA]</scope>
    <source>
        <strain>K12 / MG1655 / ATCC 47076</strain>
    </source>
</reference>
<reference key="4">
    <citation type="journal article" date="2006" name="Mol. Syst. Biol.">
        <title>Highly accurate genome sequences of Escherichia coli K-12 strains MG1655 and W3110.</title>
        <authorList>
            <person name="Hayashi K."/>
            <person name="Morooka N."/>
            <person name="Yamamoto Y."/>
            <person name="Fujita K."/>
            <person name="Isono K."/>
            <person name="Choi S."/>
            <person name="Ohtsubo E."/>
            <person name="Baba T."/>
            <person name="Wanner B.L."/>
            <person name="Mori H."/>
            <person name="Horiuchi T."/>
        </authorList>
    </citation>
    <scope>NUCLEOTIDE SEQUENCE [LARGE SCALE GENOMIC DNA]</scope>
    <source>
        <strain>K12 / W3110 / ATCC 27325 / DSM 5911</strain>
    </source>
</reference>
<reference key="5">
    <citation type="journal article" date="2006" name="Mol. Microbiol.">
        <title>Cyclic-di-GMP-mediated signalling within the sigma network of Escherichia coli.</title>
        <authorList>
            <person name="Weber H."/>
            <person name="Pesavento C."/>
            <person name="Possling A."/>
            <person name="Tischendorf G."/>
            <person name="Hengge R."/>
        </authorList>
    </citation>
    <scope>INDUCTION</scope>
    <source>
        <strain>K12 / MC4100</strain>
    </source>
</reference>
<keyword id="KW-0143">Chaperone</keyword>
<keyword id="KW-0574">Periplasm</keyword>
<keyword id="KW-1185">Reference proteome</keyword>
<keyword id="KW-0732">Signal</keyword>
<protein>
    <recommendedName>
        <fullName>Curli assembly protein CsgC</fullName>
    </recommendedName>
</protein>
<proteinExistence type="evidence at transcript level"/>